<protein>
    <recommendedName>
        <fullName evidence="1">4-hydroxy-tetrahydrodipicolinate synthase</fullName>
        <shortName evidence="1">HTPA synthase</shortName>
        <ecNumber evidence="1">4.3.3.7</ecNumber>
    </recommendedName>
</protein>
<sequence length="288" mass="32398">MFSGIGTAIITPFKNGEIDYHALKNFLETQRMVDAIILLGTTGEAPNISIEERDKLIPFVREYFPDKPLIVGVGTNSSHHTMELVKNAEKNKADALLVVTPYYNKPTQIGLYHYYKYISEHTDLEIIIYNVPGRTGVNIAPETVYKLASDCKNITALKEANSSFDQINKVLHLKPETFKVFSGNDDISFQFLASGGNGVISVASNVIPNQMVEMYKNIISGNISNARKIFYTYYPLFKALFIETNPIPVKQALNIMGLIENELRLPLYPANKETKNILEKILKECKII</sequence>
<reference key="1">
    <citation type="submission" date="2007-05" db="EMBL/GenBank/DDBJ databases">
        <title>Complete sequence of Thermosipho melanesiensis BI429.</title>
        <authorList>
            <consortium name="US DOE Joint Genome Institute"/>
            <person name="Copeland A."/>
            <person name="Lucas S."/>
            <person name="Lapidus A."/>
            <person name="Barry K."/>
            <person name="Glavina del Rio T."/>
            <person name="Dalin E."/>
            <person name="Tice H."/>
            <person name="Pitluck S."/>
            <person name="Chertkov O."/>
            <person name="Brettin T."/>
            <person name="Bruce D."/>
            <person name="Detter J.C."/>
            <person name="Han C."/>
            <person name="Schmutz J."/>
            <person name="Larimer F."/>
            <person name="Land M."/>
            <person name="Hauser L."/>
            <person name="Kyrpides N."/>
            <person name="Mikhailova N."/>
            <person name="Nelson K."/>
            <person name="Gogarten J.P."/>
            <person name="Noll K."/>
            <person name="Richardson P."/>
        </authorList>
    </citation>
    <scope>NUCLEOTIDE SEQUENCE [LARGE SCALE GENOMIC DNA]</scope>
    <source>
        <strain>DSM 12029 / CIP 104789 / BI429</strain>
    </source>
</reference>
<proteinExistence type="inferred from homology"/>
<organism>
    <name type="scientific">Thermosipho melanesiensis (strain DSM 12029 / CIP 104789 / BI429)</name>
    <dbReference type="NCBI Taxonomy" id="391009"/>
    <lineage>
        <taxon>Bacteria</taxon>
        <taxon>Thermotogati</taxon>
        <taxon>Thermotogota</taxon>
        <taxon>Thermotogae</taxon>
        <taxon>Thermotogales</taxon>
        <taxon>Fervidobacteriaceae</taxon>
        <taxon>Thermosipho</taxon>
    </lineage>
</organism>
<accession>A6LP58</accession>
<evidence type="ECO:0000255" key="1">
    <source>
        <dbReference type="HAMAP-Rule" id="MF_00418"/>
    </source>
</evidence>
<evidence type="ECO:0000305" key="2"/>
<feature type="chain" id="PRO_1000050291" description="4-hydroxy-tetrahydrodipicolinate synthase">
    <location>
        <begin position="1"/>
        <end position="288"/>
    </location>
</feature>
<feature type="active site" description="Proton donor/acceptor" evidence="1">
    <location>
        <position position="129"/>
    </location>
</feature>
<feature type="active site" description="Schiff-base intermediate with substrate" evidence="1">
    <location>
        <position position="158"/>
    </location>
</feature>
<feature type="binding site" evidence="1">
    <location>
        <position position="42"/>
    </location>
    <ligand>
        <name>pyruvate</name>
        <dbReference type="ChEBI" id="CHEBI:15361"/>
    </ligand>
</feature>
<feature type="binding site" evidence="1">
    <location>
        <position position="200"/>
    </location>
    <ligand>
        <name>pyruvate</name>
        <dbReference type="ChEBI" id="CHEBI:15361"/>
    </ligand>
</feature>
<feature type="site" description="Part of a proton relay during catalysis" evidence="1">
    <location>
        <position position="41"/>
    </location>
</feature>
<feature type="site" description="Part of a proton relay during catalysis" evidence="1">
    <location>
        <position position="103"/>
    </location>
</feature>
<gene>
    <name evidence="1" type="primary">dapA</name>
    <name type="ordered locus">Tmel_1875</name>
</gene>
<comment type="function">
    <text evidence="1">Catalyzes the condensation of (S)-aspartate-beta-semialdehyde [(S)-ASA] and pyruvate to 4-hydroxy-tetrahydrodipicolinate (HTPA).</text>
</comment>
<comment type="catalytic activity">
    <reaction evidence="1">
        <text>L-aspartate 4-semialdehyde + pyruvate = (2S,4S)-4-hydroxy-2,3,4,5-tetrahydrodipicolinate + H2O + H(+)</text>
        <dbReference type="Rhea" id="RHEA:34171"/>
        <dbReference type="ChEBI" id="CHEBI:15361"/>
        <dbReference type="ChEBI" id="CHEBI:15377"/>
        <dbReference type="ChEBI" id="CHEBI:15378"/>
        <dbReference type="ChEBI" id="CHEBI:67139"/>
        <dbReference type="ChEBI" id="CHEBI:537519"/>
        <dbReference type="EC" id="4.3.3.7"/>
    </reaction>
</comment>
<comment type="pathway">
    <text evidence="1">Amino-acid biosynthesis; L-lysine biosynthesis via DAP pathway; (S)-tetrahydrodipicolinate from L-aspartate: step 3/4.</text>
</comment>
<comment type="subunit">
    <text evidence="1">Homotetramer; dimer of dimers.</text>
</comment>
<comment type="subcellular location">
    <subcellularLocation>
        <location evidence="1">Cytoplasm</location>
    </subcellularLocation>
</comment>
<comment type="similarity">
    <text evidence="1">Belongs to the DapA family.</text>
</comment>
<comment type="caution">
    <text evidence="2">Was originally thought to be a dihydrodipicolinate synthase (DHDPS), catalyzing the condensation of (S)-aspartate-beta-semialdehyde [(S)-ASA] and pyruvate to dihydrodipicolinate (DHDP). However, it was shown in E.coli that the product of the enzymatic reaction is not dihydrodipicolinate but in fact (4S)-4-hydroxy-2,3,4,5-tetrahydro-(2S)-dipicolinic acid (HTPA), and that the consecutive dehydration reaction leading to DHDP is not spontaneous but catalyzed by DapB.</text>
</comment>
<keyword id="KW-0028">Amino-acid biosynthesis</keyword>
<keyword id="KW-0963">Cytoplasm</keyword>
<keyword id="KW-0220">Diaminopimelate biosynthesis</keyword>
<keyword id="KW-0456">Lyase</keyword>
<keyword id="KW-0457">Lysine biosynthesis</keyword>
<keyword id="KW-0704">Schiff base</keyword>
<name>DAPA_THEM4</name>
<dbReference type="EC" id="4.3.3.7" evidence="1"/>
<dbReference type="EMBL" id="CP000716">
    <property type="protein sequence ID" value="ABR31709.1"/>
    <property type="molecule type" value="Genomic_DNA"/>
</dbReference>
<dbReference type="RefSeq" id="WP_012058067.1">
    <property type="nucleotide sequence ID" value="NC_009616.1"/>
</dbReference>
<dbReference type="SMR" id="A6LP58"/>
<dbReference type="STRING" id="391009.Tmel_1875"/>
<dbReference type="KEGG" id="tme:Tmel_1875"/>
<dbReference type="eggNOG" id="COG0329">
    <property type="taxonomic scope" value="Bacteria"/>
</dbReference>
<dbReference type="HOGENOM" id="CLU_049343_7_0_0"/>
<dbReference type="OrthoDB" id="9782828at2"/>
<dbReference type="UniPathway" id="UPA00034">
    <property type="reaction ID" value="UER00017"/>
</dbReference>
<dbReference type="Proteomes" id="UP000001110">
    <property type="component" value="Chromosome"/>
</dbReference>
<dbReference type="GO" id="GO:0005829">
    <property type="term" value="C:cytosol"/>
    <property type="evidence" value="ECO:0007669"/>
    <property type="project" value="TreeGrafter"/>
</dbReference>
<dbReference type="GO" id="GO:0008840">
    <property type="term" value="F:4-hydroxy-tetrahydrodipicolinate synthase activity"/>
    <property type="evidence" value="ECO:0007669"/>
    <property type="project" value="UniProtKB-UniRule"/>
</dbReference>
<dbReference type="GO" id="GO:0019877">
    <property type="term" value="P:diaminopimelate biosynthetic process"/>
    <property type="evidence" value="ECO:0007669"/>
    <property type="project" value="UniProtKB-UniRule"/>
</dbReference>
<dbReference type="GO" id="GO:0009089">
    <property type="term" value="P:lysine biosynthetic process via diaminopimelate"/>
    <property type="evidence" value="ECO:0007669"/>
    <property type="project" value="UniProtKB-UniRule"/>
</dbReference>
<dbReference type="CDD" id="cd00950">
    <property type="entry name" value="DHDPS"/>
    <property type="match status" value="1"/>
</dbReference>
<dbReference type="Gene3D" id="3.20.20.70">
    <property type="entry name" value="Aldolase class I"/>
    <property type="match status" value="1"/>
</dbReference>
<dbReference type="HAMAP" id="MF_00418">
    <property type="entry name" value="DapA"/>
    <property type="match status" value="1"/>
</dbReference>
<dbReference type="InterPro" id="IPR013785">
    <property type="entry name" value="Aldolase_TIM"/>
</dbReference>
<dbReference type="InterPro" id="IPR005263">
    <property type="entry name" value="DapA"/>
</dbReference>
<dbReference type="InterPro" id="IPR002220">
    <property type="entry name" value="DapA-like"/>
</dbReference>
<dbReference type="InterPro" id="IPR020625">
    <property type="entry name" value="Schiff_base-form_aldolases_AS"/>
</dbReference>
<dbReference type="InterPro" id="IPR020624">
    <property type="entry name" value="Schiff_base-form_aldolases_CS"/>
</dbReference>
<dbReference type="NCBIfam" id="TIGR00674">
    <property type="entry name" value="dapA"/>
    <property type="match status" value="1"/>
</dbReference>
<dbReference type="PANTHER" id="PTHR12128:SF66">
    <property type="entry name" value="4-HYDROXY-2-OXOGLUTARATE ALDOLASE, MITOCHONDRIAL"/>
    <property type="match status" value="1"/>
</dbReference>
<dbReference type="PANTHER" id="PTHR12128">
    <property type="entry name" value="DIHYDRODIPICOLINATE SYNTHASE"/>
    <property type="match status" value="1"/>
</dbReference>
<dbReference type="Pfam" id="PF00701">
    <property type="entry name" value="DHDPS"/>
    <property type="match status" value="1"/>
</dbReference>
<dbReference type="PIRSF" id="PIRSF001365">
    <property type="entry name" value="DHDPS"/>
    <property type="match status" value="1"/>
</dbReference>
<dbReference type="PRINTS" id="PR00146">
    <property type="entry name" value="DHPICSNTHASE"/>
</dbReference>
<dbReference type="SMART" id="SM01130">
    <property type="entry name" value="DHDPS"/>
    <property type="match status" value="1"/>
</dbReference>
<dbReference type="SUPFAM" id="SSF51569">
    <property type="entry name" value="Aldolase"/>
    <property type="match status" value="1"/>
</dbReference>
<dbReference type="PROSITE" id="PS00665">
    <property type="entry name" value="DHDPS_1"/>
    <property type="match status" value="1"/>
</dbReference>
<dbReference type="PROSITE" id="PS00666">
    <property type="entry name" value="DHDPS_2"/>
    <property type="match status" value="1"/>
</dbReference>